<reference key="1">
    <citation type="journal article" date="1997" name="Nature">
        <title>The complete genome sequence of the Gram-positive bacterium Bacillus subtilis.</title>
        <authorList>
            <person name="Kunst F."/>
            <person name="Ogasawara N."/>
            <person name="Moszer I."/>
            <person name="Albertini A.M."/>
            <person name="Alloni G."/>
            <person name="Azevedo V."/>
            <person name="Bertero M.G."/>
            <person name="Bessieres P."/>
            <person name="Bolotin A."/>
            <person name="Borchert S."/>
            <person name="Borriss R."/>
            <person name="Boursier L."/>
            <person name="Brans A."/>
            <person name="Braun M."/>
            <person name="Brignell S.C."/>
            <person name="Bron S."/>
            <person name="Brouillet S."/>
            <person name="Bruschi C.V."/>
            <person name="Caldwell B."/>
            <person name="Capuano V."/>
            <person name="Carter N.M."/>
            <person name="Choi S.-K."/>
            <person name="Codani J.-J."/>
            <person name="Connerton I.F."/>
            <person name="Cummings N.J."/>
            <person name="Daniel R.A."/>
            <person name="Denizot F."/>
            <person name="Devine K.M."/>
            <person name="Duesterhoeft A."/>
            <person name="Ehrlich S.D."/>
            <person name="Emmerson P.T."/>
            <person name="Entian K.-D."/>
            <person name="Errington J."/>
            <person name="Fabret C."/>
            <person name="Ferrari E."/>
            <person name="Foulger D."/>
            <person name="Fritz C."/>
            <person name="Fujita M."/>
            <person name="Fujita Y."/>
            <person name="Fuma S."/>
            <person name="Galizzi A."/>
            <person name="Galleron N."/>
            <person name="Ghim S.-Y."/>
            <person name="Glaser P."/>
            <person name="Goffeau A."/>
            <person name="Golightly E.J."/>
            <person name="Grandi G."/>
            <person name="Guiseppi G."/>
            <person name="Guy B.J."/>
            <person name="Haga K."/>
            <person name="Haiech J."/>
            <person name="Harwood C.R."/>
            <person name="Henaut A."/>
            <person name="Hilbert H."/>
            <person name="Holsappel S."/>
            <person name="Hosono S."/>
            <person name="Hullo M.-F."/>
            <person name="Itaya M."/>
            <person name="Jones L.-M."/>
            <person name="Joris B."/>
            <person name="Karamata D."/>
            <person name="Kasahara Y."/>
            <person name="Klaerr-Blanchard M."/>
            <person name="Klein C."/>
            <person name="Kobayashi Y."/>
            <person name="Koetter P."/>
            <person name="Koningstein G."/>
            <person name="Krogh S."/>
            <person name="Kumano M."/>
            <person name="Kurita K."/>
            <person name="Lapidus A."/>
            <person name="Lardinois S."/>
            <person name="Lauber J."/>
            <person name="Lazarevic V."/>
            <person name="Lee S.-M."/>
            <person name="Levine A."/>
            <person name="Liu H."/>
            <person name="Masuda S."/>
            <person name="Mauel C."/>
            <person name="Medigue C."/>
            <person name="Medina N."/>
            <person name="Mellado R.P."/>
            <person name="Mizuno M."/>
            <person name="Moestl D."/>
            <person name="Nakai S."/>
            <person name="Noback M."/>
            <person name="Noone D."/>
            <person name="O'Reilly M."/>
            <person name="Ogawa K."/>
            <person name="Ogiwara A."/>
            <person name="Oudega B."/>
            <person name="Park S.-H."/>
            <person name="Parro V."/>
            <person name="Pohl T.M."/>
            <person name="Portetelle D."/>
            <person name="Porwollik S."/>
            <person name="Prescott A.M."/>
            <person name="Presecan E."/>
            <person name="Pujic P."/>
            <person name="Purnelle B."/>
            <person name="Rapoport G."/>
            <person name="Rey M."/>
            <person name="Reynolds S."/>
            <person name="Rieger M."/>
            <person name="Rivolta C."/>
            <person name="Rocha E."/>
            <person name="Roche B."/>
            <person name="Rose M."/>
            <person name="Sadaie Y."/>
            <person name="Sato T."/>
            <person name="Scanlan E."/>
            <person name="Schleich S."/>
            <person name="Schroeter R."/>
            <person name="Scoffone F."/>
            <person name="Sekiguchi J."/>
            <person name="Sekowska A."/>
            <person name="Seror S.J."/>
            <person name="Serror P."/>
            <person name="Shin B.-S."/>
            <person name="Soldo B."/>
            <person name="Sorokin A."/>
            <person name="Tacconi E."/>
            <person name="Takagi T."/>
            <person name="Takahashi H."/>
            <person name="Takemaru K."/>
            <person name="Takeuchi M."/>
            <person name="Tamakoshi A."/>
            <person name="Tanaka T."/>
            <person name="Terpstra P."/>
            <person name="Tognoni A."/>
            <person name="Tosato V."/>
            <person name="Uchiyama S."/>
            <person name="Vandenbol M."/>
            <person name="Vannier F."/>
            <person name="Vassarotti A."/>
            <person name="Viari A."/>
            <person name="Wambutt R."/>
            <person name="Wedler E."/>
            <person name="Wedler H."/>
            <person name="Weitzenegger T."/>
            <person name="Winters P."/>
            <person name="Wipat A."/>
            <person name="Yamamoto H."/>
            <person name="Yamane K."/>
            <person name="Yasumoto K."/>
            <person name="Yata K."/>
            <person name="Yoshida K."/>
            <person name="Yoshikawa H.-F."/>
            <person name="Zumstein E."/>
            <person name="Yoshikawa H."/>
            <person name="Danchin A."/>
        </authorList>
    </citation>
    <scope>NUCLEOTIDE SEQUENCE [LARGE SCALE GENOMIC DNA]</scope>
    <source>
        <strain>168</strain>
    </source>
</reference>
<reference key="2">
    <citation type="journal article" date="2004" name="J. Bacteriol.">
        <title>Dynamic patterns of subcellular protein localization during spore coat morphogenesis in Bacillus subtilis.</title>
        <authorList>
            <person name="van Ooij C."/>
            <person name="Eichenberger P."/>
            <person name="Losick R."/>
        </authorList>
    </citation>
    <scope>FUNCTION</scope>
    <scope>SUBCELLULAR LOCATION</scope>
</reference>
<comment type="function">
    <text evidence="1">Involved in sporulation.</text>
</comment>
<comment type="subcellular location">
    <subcellularLocation>
        <location evidence="1">Forespore outer membrane</location>
        <topology evidence="1">Peripheral membrane protein</topology>
    </subcellularLocation>
    <subcellularLocation>
        <location evidence="1">Spore coat</location>
    </subcellularLocation>
    <text>Initially localizes to a focus at one end of the forespore, which then undergoes transformation into a ring adjacent to the forespore. Next, the ring becomes a cap at the mother cell pole of the forespore that eventually spreads around the entire developing spore.</text>
</comment>
<comment type="similarity">
    <text evidence="2">Belongs to the CotS family.</text>
</comment>
<keyword id="KW-0472">Membrane</keyword>
<keyword id="KW-1185">Reference proteome</keyword>
<keyword id="KW-0749">Sporulation</keyword>
<dbReference type="EMBL" id="AL009126">
    <property type="protein sequence ID" value="CAB15217.1"/>
    <property type="molecule type" value="Genomic_DNA"/>
</dbReference>
<dbReference type="PIR" id="B70024">
    <property type="entry name" value="B70024"/>
</dbReference>
<dbReference type="SMR" id="O32123"/>
<dbReference type="FunCoup" id="O32123">
    <property type="interactions" value="4"/>
</dbReference>
<dbReference type="STRING" id="224308.BSU32270"/>
<dbReference type="PaxDb" id="224308-BSU32270"/>
<dbReference type="EnsemblBacteria" id="CAB15217">
    <property type="protein sequence ID" value="CAB15217"/>
    <property type="gene ID" value="BSU_32270"/>
</dbReference>
<dbReference type="GeneID" id="936635"/>
<dbReference type="KEGG" id="bsu:BSU32270"/>
<dbReference type="PATRIC" id="fig|224308.179.peg.3493"/>
<dbReference type="eggNOG" id="COG2334">
    <property type="taxonomic scope" value="Bacteria"/>
</dbReference>
<dbReference type="InParanoid" id="O32123"/>
<dbReference type="OrthoDB" id="2986702at2"/>
<dbReference type="PhylomeDB" id="O32123"/>
<dbReference type="BioCyc" id="BSUB:BSU32270-MONOMER"/>
<dbReference type="Proteomes" id="UP000001570">
    <property type="component" value="Chromosome"/>
</dbReference>
<dbReference type="GO" id="GO:0042601">
    <property type="term" value="C:endospore-forming forespore"/>
    <property type="evidence" value="ECO:0000314"/>
    <property type="project" value="CACAO"/>
</dbReference>
<dbReference type="GO" id="GO:0016020">
    <property type="term" value="C:membrane"/>
    <property type="evidence" value="ECO:0007669"/>
    <property type="project" value="UniProtKB-KW"/>
</dbReference>
<dbReference type="GO" id="GO:0030435">
    <property type="term" value="P:sporulation resulting in formation of a cellular spore"/>
    <property type="evidence" value="ECO:0007669"/>
    <property type="project" value="UniProtKB-KW"/>
</dbReference>
<dbReference type="Gene3D" id="3.90.1200.10">
    <property type="match status" value="1"/>
</dbReference>
<dbReference type="InterPro" id="IPR047175">
    <property type="entry name" value="CotS-like"/>
</dbReference>
<dbReference type="InterPro" id="IPR011009">
    <property type="entry name" value="Kinase-like_dom_sf"/>
</dbReference>
<dbReference type="InterPro" id="IPR014254">
    <property type="entry name" value="Spore_coat_YutH"/>
</dbReference>
<dbReference type="NCBIfam" id="TIGR02905">
    <property type="entry name" value="spore_yutH"/>
    <property type="match status" value="1"/>
</dbReference>
<dbReference type="PANTHER" id="PTHR39179:SF2">
    <property type="entry name" value="ENDOSPORE COAT-ASSOCIATED PROTEIN YUTH"/>
    <property type="match status" value="1"/>
</dbReference>
<dbReference type="PANTHER" id="PTHR39179">
    <property type="entry name" value="SPORE COAT PROTEIN I"/>
    <property type="match status" value="1"/>
</dbReference>
<dbReference type="SUPFAM" id="SSF56112">
    <property type="entry name" value="Protein kinase-like (PK-like)"/>
    <property type="match status" value="1"/>
</dbReference>
<gene>
    <name type="primary">yutH</name>
    <name type="ordered locus">BSU32270</name>
</gene>
<evidence type="ECO:0000269" key="1">
    <source>
    </source>
</evidence>
<evidence type="ECO:0000305" key="2"/>
<sequence length="339" mass="40247">MVKGTIKEKYGIHIRQLSMYQHTYQCFQTPNSYFLIVPVSQFSETELAELYYMSQYLQEQSDPYVSVFIFTKEGELTFEHEGKTYALLKAAPPYSNRAFSIGAELAEFHRKGRGYPYEVKAAGRIGQWKDLWGKRIDQLEAFWQRKVQTPPHEPFDKKMIESFPYYLGLSENAIQYLVDTELDDKPQAADSGTICHQRMERHTWSPESLIRIPADWVFDHASRDLAEYMRHTFLHHRQDFNQQGFLFLQEYEQVTPLSSFSKRLLYSRLLFPLHYFEIVESYYMSSESEKHYFEEQLDFILNDCGRYEQFLNTAQEFMNMRAQKLFVPRVSWLGKGSSR</sequence>
<feature type="chain" id="PRO_0000360483" description="Endospore coat-associated protein YutH">
    <location>
        <begin position="1"/>
        <end position="339"/>
    </location>
</feature>
<proteinExistence type="inferred from homology"/>
<accession>O32123</accession>
<name>YUTH_BACSU</name>
<organism>
    <name type="scientific">Bacillus subtilis (strain 168)</name>
    <dbReference type="NCBI Taxonomy" id="224308"/>
    <lineage>
        <taxon>Bacteria</taxon>
        <taxon>Bacillati</taxon>
        <taxon>Bacillota</taxon>
        <taxon>Bacilli</taxon>
        <taxon>Bacillales</taxon>
        <taxon>Bacillaceae</taxon>
        <taxon>Bacillus</taxon>
    </lineage>
</organism>
<protein>
    <recommendedName>
        <fullName>Endospore coat-associated protein YutH</fullName>
    </recommendedName>
</protein>